<name>SLYD_TREPA</name>
<sequence length="176" mass="18428">MKIANECVVNIEYTLRDDTGEIIDSSDVMGALEYVQGHGMIIPGLETALINREEGEEFSVTIPPVGAYGEVQEDLRMTVGRDQFPPNVPIEVGMRFDAGSGGDSRPVTVTDVQGETIIVDGNHPLAGKTLHFEVAVRSVREATDDDLAALLFRESTSGGGCGSGAGGCGSCGAGCH</sequence>
<proteinExistence type="evidence at protein level"/>
<feature type="chain" id="PRO_0000075362" description="FKBP-type peptidyl-prolyl cis-trans isomerase SlyD">
    <location>
        <begin position="1"/>
        <end position="176"/>
    </location>
</feature>
<feature type="domain" description="PPIase FKBP-type" evidence="3">
    <location>
        <begin position="1"/>
        <end position="95"/>
    </location>
</feature>
<feature type="region of interest" description="PPIase first part" evidence="1">
    <location>
        <begin position="1"/>
        <end position="69"/>
    </location>
</feature>
<feature type="region of interest" description="IF-chaperone" evidence="1">
    <location>
        <begin position="76"/>
        <end position="120"/>
    </location>
</feature>
<feature type="region of interest" description="PPIase second part" evidence="1">
    <location>
        <begin position="129"/>
        <end position="151"/>
    </location>
</feature>
<feature type="binding site" evidence="2">
    <location>
        <position position="161"/>
    </location>
    <ligand>
        <name>Ni(2+)</name>
        <dbReference type="ChEBI" id="CHEBI:49786"/>
    </ligand>
</feature>
<feature type="binding site" evidence="2">
    <location>
        <position position="168"/>
    </location>
    <ligand>
        <name>Ni(2+)</name>
        <dbReference type="ChEBI" id="CHEBI:49786"/>
    </ligand>
</feature>
<feature type="binding site" evidence="2">
    <location>
        <position position="175"/>
    </location>
    <ligand>
        <name>Ni(2+)</name>
        <dbReference type="ChEBI" id="CHEBI:49786"/>
    </ligand>
</feature>
<keyword id="KW-0143">Chaperone</keyword>
<keyword id="KW-0963">Cytoplasm</keyword>
<keyword id="KW-0413">Isomerase</keyword>
<keyword id="KW-0479">Metal-binding</keyword>
<keyword id="KW-0533">Nickel</keyword>
<keyword id="KW-1185">Reference proteome</keyword>
<keyword id="KW-0697">Rotamase</keyword>
<comment type="function">
    <text evidence="4">Folding helper with both chaperone and peptidyl-prolyl cis-trans isomerase (PPIase) activities. Chaperone activity prevents aggregation of unfolded or partially folded proteins and promotes their correct folding. PPIases catalyze the cis-trans isomerization of Xaa-Pro bonds of peptides, which accelerates slow steps of protein folding and thus shortens the lifetime of intermediates. Both strategies lower the concentration of intermediates and increase the productivity and yield of the folding reaction.</text>
</comment>
<comment type="function">
    <text evidence="1">Also involved in hydrogenase metallocenter assembly, probably by participating in the nickel insertion step. This function in hydrogenase biosynthesis requires chaperone activity and the presence of the metal-binding domain, but not PPIase activity (By similarity).</text>
</comment>
<comment type="catalytic activity">
    <reaction evidence="4">
        <text>[protein]-peptidylproline (omega=180) = [protein]-peptidylproline (omega=0)</text>
        <dbReference type="Rhea" id="RHEA:16237"/>
        <dbReference type="Rhea" id="RHEA-COMP:10747"/>
        <dbReference type="Rhea" id="RHEA-COMP:10748"/>
        <dbReference type="ChEBI" id="CHEBI:83833"/>
        <dbReference type="ChEBI" id="CHEBI:83834"/>
        <dbReference type="EC" id="5.2.1.8"/>
    </reaction>
</comment>
<comment type="subcellular location">
    <subcellularLocation>
        <location evidence="1">Cytoplasm</location>
    </subcellularLocation>
</comment>
<comment type="domain">
    <text evidence="1">The N-terminal region consists of two globular folded domains that contain prolyl isomerase and chaperone activities.</text>
</comment>
<comment type="domain">
    <text evidence="1">The C-terminal region binds nickel ions.</text>
</comment>
<comment type="similarity">
    <text evidence="5">Belongs to the FKBP-type PPIase family.</text>
</comment>
<dbReference type="EC" id="5.2.1.8"/>
<dbReference type="EMBL" id="AE000520">
    <property type="protein sequence ID" value="AAC65334.1"/>
    <property type="molecule type" value="Genomic_DNA"/>
</dbReference>
<dbReference type="PIR" id="D71336">
    <property type="entry name" value="D71336"/>
</dbReference>
<dbReference type="RefSeq" id="WP_010881797.1">
    <property type="nucleotide sequence ID" value="NC_021490.2"/>
</dbReference>
<dbReference type="SMR" id="O83369"/>
<dbReference type="STRING" id="243276.TP_0349"/>
<dbReference type="EnsemblBacteria" id="AAC65334">
    <property type="protein sequence ID" value="AAC65334"/>
    <property type="gene ID" value="TP_0349"/>
</dbReference>
<dbReference type="KEGG" id="tpa:TP_0349"/>
<dbReference type="KEGG" id="tpw:TPANIC_0349"/>
<dbReference type="eggNOG" id="COG1047">
    <property type="taxonomic scope" value="Bacteria"/>
</dbReference>
<dbReference type="HOGENOM" id="CLU_098197_1_0_12"/>
<dbReference type="OrthoDB" id="9808891at2"/>
<dbReference type="Proteomes" id="UP000000811">
    <property type="component" value="Chromosome"/>
</dbReference>
<dbReference type="GO" id="GO:0005737">
    <property type="term" value="C:cytoplasm"/>
    <property type="evidence" value="ECO:0007669"/>
    <property type="project" value="UniProtKB-SubCell"/>
</dbReference>
<dbReference type="GO" id="GO:0046872">
    <property type="term" value="F:metal ion binding"/>
    <property type="evidence" value="ECO:0007669"/>
    <property type="project" value="UniProtKB-KW"/>
</dbReference>
<dbReference type="GO" id="GO:0003755">
    <property type="term" value="F:peptidyl-prolyl cis-trans isomerase activity"/>
    <property type="evidence" value="ECO:0000314"/>
    <property type="project" value="UniProtKB"/>
</dbReference>
<dbReference type="GO" id="GO:0042026">
    <property type="term" value="P:protein refolding"/>
    <property type="evidence" value="ECO:0000314"/>
    <property type="project" value="UniProtKB"/>
</dbReference>
<dbReference type="Gene3D" id="3.10.50.40">
    <property type="match status" value="1"/>
</dbReference>
<dbReference type="InterPro" id="IPR046357">
    <property type="entry name" value="PPIase_dom_sf"/>
</dbReference>
<dbReference type="InterPro" id="IPR001179">
    <property type="entry name" value="PPIase_FKBP_dom"/>
</dbReference>
<dbReference type="PANTHER" id="PTHR47861">
    <property type="entry name" value="FKBP-TYPE PEPTIDYL-PROLYL CIS-TRANS ISOMERASE SLYD"/>
    <property type="match status" value="1"/>
</dbReference>
<dbReference type="PANTHER" id="PTHR47861:SF3">
    <property type="entry name" value="FKBP-TYPE PEPTIDYL-PROLYL CIS-TRANS ISOMERASE SLYD"/>
    <property type="match status" value="1"/>
</dbReference>
<dbReference type="Pfam" id="PF00254">
    <property type="entry name" value="FKBP_C"/>
    <property type="match status" value="1"/>
</dbReference>
<dbReference type="SUPFAM" id="SSF54534">
    <property type="entry name" value="FKBP-like"/>
    <property type="match status" value="1"/>
</dbReference>
<dbReference type="PROSITE" id="PS50059">
    <property type="entry name" value="FKBP_PPIASE"/>
    <property type="match status" value="1"/>
</dbReference>
<organism>
    <name type="scientific">Treponema pallidum (strain Nichols)</name>
    <dbReference type="NCBI Taxonomy" id="243276"/>
    <lineage>
        <taxon>Bacteria</taxon>
        <taxon>Pseudomonadati</taxon>
        <taxon>Spirochaetota</taxon>
        <taxon>Spirochaetia</taxon>
        <taxon>Spirochaetales</taxon>
        <taxon>Treponemataceae</taxon>
        <taxon>Treponema</taxon>
    </lineage>
</organism>
<gene>
    <name type="primary">slyD</name>
    <name type="ordered locus">TP_0349</name>
</gene>
<evidence type="ECO:0000250" key="1"/>
<evidence type="ECO:0000255" key="2"/>
<evidence type="ECO:0000255" key="3">
    <source>
        <dbReference type="PROSITE-ProRule" id="PRU00277"/>
    </source>
</evidence>
<evidence type="ECO:0000269" key="4">
    <source>
    </source>
</evidence>
<evidence type="ECO:0000305" key="5"/>
<reference key="1">
    <citation type="journal article" date="1998" name="Science">
        <title>Complete genome sequence of Treponema pallidum, the syphilis spirochete.</title>
        <authorList>
            <person name="Fraser C.M."/>
            <person name="Norris S.J."/>
            <person name="Weinstock G.M."/>
            <person name="White O."/>
            <person name="Sutton G.G."/>
            <person name="Dodson R.J."/>
            <person name="Gwinn M.L."/>
            <person name="Hickey E.K."/>
            <person name="Clayton R.A."/>
            <person name="Ketchum K.A."/>
            <person name="Sodergren E."/>
            <person name="Hardham J.M."/>
            <person name="McLeod M.P."/>
            <person name="Salzberg S.L."/>
            <person name="Peterson J.D."/>
            <person name="Khalak H.G."/>
            <person name="Richardson D.L."/>
            <person name="Howell J.K."/>
            <person name="Chidambaram M."/>
            <person name="Utterback T.R."/>
            <person name="McDonald L.A."/>
            <person name="Artiach P."/>
            <person name="Bowman C."/>
            <person name="Cotton M.D."/>
            <person name="Fujii C."/>
            <person name="Garland S.A."/>
            <person name="Hatch B."/>
            <person name="Horst K."/>
            <person name="Roberts K.M."/>
            <person name="Sandusky M."/>
            <person name="Weidman J.F."/>
            <person name="Smith H.O."/>
            <person name="Venter J.C."/>
        </authorList>
    </citation>
    <scope>NUCLEOTIDE SEQUENCE [LARGE SCALE GENOMIC DNA]</scope>
    <source>
        <strain>Nichols</strain>
    </source>
</reference>
<reference key="2">
    <citation type="journal article" date="2006" name="Biochemistry">
        <title>SlyD proteins from different species exhibit high prolyl isomerase and chaperone activities.</title>
        <authorList>
            <person name="Scholz C."/>
            <person name="Eckert B."/>
            <person name="Hagn F."/>
            <person name="Schaarschmidt P."/>
            <person name="Balbach J."/>
            <person name="Schmid F.X."/>
        </authorList>
    </citation>
    <scope>FUNCTION AS A CHAPERONE AND A PPIASE</scope>
    <scope>CATALYTIC ACTIVITY</scope>
</reference>
<accession>O83369</accession>
<protein>
    <recommendedName>
        <fullName>FKBP-type peptidyl-prolyl cis-trans isomerase SlyD</fullName>
        <shortName>PPIase</shortName>
        <ecNumber>5.2.1.8</ecNumber>
    </recommendedName>
    <alternativeName>
        <fullName>Metallochaperone SlyD</fullName>
    </alternativeName>
</protein>